<reference key="1">
    <citation type="journal article" date="1995" name="DNA Res.">
        <title>Sequence analysis of the genome of the unicellular cyanobacterium Synechocystis sp. strain PCC6803. I. Sequence features in the 1 Mb region from map positions 64% to 92% of the genome.</title>
        <authorList>
            <person name="Kaneko T."/>
            <person name="Tanaka A."/>
            <person name="Sato S."/>
            <person name="Kotani H."/>
            <person name="Sazuka T."/>
            <person name="Miyajima N."/>
            <person name="Sugiura M."/>
            <person name="Tabata S."/>
        </authorList>
    </citation>
    <scope>NUCLEOTIDE SEQUENCE [LARGE SCALE GENOMIC DNA]</scope>
    <source>
        <strain>ATCC 27184 / PCC 6803 / N-1</strain>
    </source>
</reference>
<reference key="2">
    <citation type="journal article" date="1996" name="DNA Res.">
        <title>Sequence analysis of the genome of the unicellular cyanobacterium Synechocystis sp. strain PCC6803. II. Sequence determination of the entire genome and assignment of potential protein-coding regions.</title>
        <authorList>
            <person name="Kaneko T."/>
            <person name="Sato S."/>
            <person name="Kotani H."/>
            <person name="Tanaka A."/>
            <person name="Asamizu E."/>
            <person name="Nakamura Y."/>
            <person name="Miyajima N."/>
            <person name="Hirosawa M."/>
            <person name="Sugiura M."/>
            <person name="Sasamoto S."/>
            <person name="Kimura T."/>
            <person name="Hosouchi T."/>
            <person name="Matsuno A."/>
            <person name="Muraki A."/>
            <person name="Nakazaki N."/>
            <person name="Naruo K."/>
            <person name="Okumura S."/>
            <person name="Shimpo S."/>
            <person name="Takeuchi C."/>
            <person name="Wada T."/>
            <person name="Watanabe A."/>
            <person name="Yamada M."/>
            <person name="Yasuda M."/>
            <person name="Tabata S."/>
        </authorList>
    </citation>
    <scope>NUCLEOTIDE SEQUENCE [LARGE SCALE GENOMIC DNA]</scope>
    <source>
        <strain>ATCC 27184 / PCC 6803 / Kazusa</strain>
    </source>
</reference>
<organism>
    <name type="scientific">Synechocystis sp. (strain ATCC 27184 / PCC 6803 / Kazusa)</name>
    <dbReference type="NCBI Taxonomy" id="1111708"/>
    <lineage>
        <taxon>Bacteria</taxon>
        <taxon>Bacillati</taxon>
        <taxon>Cyanobacteriota</taxon>
        <taxon>Cyanophyceae</taxon>
        <taxon>Synechococcales</taxon>
        <taxon>Merismopediaceae</taxon>
        <taxon>Synechocystis</taxon>
    </lineage>
</organism>
<feature type="chain" id="PRO_0000139256" description="Methionine--tRNA ligase">
    <location>
        <begin position="1"/>
        <end position="532"/>
    </location>
</feature>
<feature type="short sequence motif" description="'HIGH' region">
    <location>
        <begin position="16"/>
        <end position="26"/>
    </location>
</feature>
<feature type="short sequence motif" description="'KMSKS' region">
    <location>
        <begin position="305"/>
        <end position="309"/>
    </location>
</feature>
<feature type="binding site" evidence="1">
    <location>
        <position position="131"/>
    </location>
    <ligand>
        <name>Zn(2+)</name>
        <dbReference type="ChEBI" id="CHEBI:29105"/>
    </ligand>
</feature>
<feature type="binding site" evidence="1">
    <location>
        <position position="134"/>
    </location>
    <ligand>
        <name>Zn(2+)</name>
        <dbReference type="ChEBI" id="CHEBI:29105"/>
    </ligand>
</feature>
<feature type="binding site" evidence="1">
    <location>
        <position position="149"/>
    </location>
    <ligand>
        <name>Zn(2+)</name>
        <dbReference type="ChEBI" id="CHEBI:29105"/>
    </ligand>
</feature>
<feature type="binding site" evidence="1">
    <location>
        <position position="152"/>
    </location>
    <ligand>
        <name>Zn(2+)</name>
        <dbReference type="ChEBI" id="CHEBI:29105"/>
    </ligand>
</feature>
<feature type="binding site" evidence="1">
    <location>
        <position position="308"/>
    </location>
    <ligand>
        <name>ATP</name>
        <dbReference type="ChEBI" id="CHEBI:30616"/>
    </ligand>
</feature>
<sequence>MLDSSVPTFSVTTPLYYVNDVPHLGSAYTTVVADTLARFKRLQGYDVLMITGTDEHGQKIQRTAEAQELDPQTHCDRTVVKFKELWRSLNILYDRFSRTTDPRHLAIVKDFFQRVWDKGDIYLAQQQGWYCVACEEFKEKRDLLEDNHCPLHPNRKAEWRDEENYFFRLSRYQHPLEELYAQRPEFIQPSSRRNEVLNFVAQGLQDFSISRVNLDWGFPLPNDPNHTIYVWFDALLGYVTALLDEDEEPNLTNALVKWWPINLHLIGKDILRFHAVYWPAMLMSAELAIPAQVFGHGFLTKDGQKMGKSLGNTVDPLDLINRYGEDAFRYYFLKEIEFGKDGDFNEQRFVNVLNADLANDLGNLLNRTLGMVKKYCQGQGPQVMATDLAPDNPLKALGSHLGEEVSSAYERLSFTDACEAIFTLVRAGNKYIDDMAPWKLFKQGSQKEVEDVLYSVLESIRLSAYLLSPIVPRLSTKIYQQLGFTWDFDQWRSPLEQAEEFNRHQSWGQLGANQNLPPAQPIFTKLELPAEE</sequence>
<comment type="function">
    <text evidence="1">Is required not only for elongation of protein synthesis but also for the initiation of all mRNA translation through initiator tRNA(fMet) aminoacylation.</text>
</comment>
<comment type="catalytic activity">
    <reaction>
        <text>tRNA(Met) + L-methionine + ATP = L-methionyl-tRNA(Met) + AMP + diphosphate</text>
        <dbReference type="Rhea" id="RHEA:13481"/>
        <dbReference type="Rhea" id="RHEA-COMP:9667"/>
        <dbReference type="Rhea" id="RHEA-COMP:9698"/>
        <dbReference type="ChEBI" id="CHEBI:30616"/>
        <dbReference type="ChEBI" id="CHEBI:33019"/>
        <dbReference type="ChEBI" id="CHEBI:57844"/>
        <dbReference type="ChEBI" id="CHEBI:78442"/>
        <dbReference type="ChEBI" id="CHEBI:78530"/>
        <dbReference type="ChEBI" id="CHEBI:456215"/>
        <dbReference type="EC" id="6.1.1.10"/>
    </reaction>
</comment>
<comment type="cofactor">
    <cofactor evidence="1">
        <name>Zn(2+)</name>
        <dbReference type="ChEBI" id="CHEBI:29105"/>
    </cofactor>
    <text evidence="1">Binds 1 zinc ion per subunit.</text>
</comment>
<comment type="subunit">
    <text evidence="1">Monomer.</text>
</comment>
<comment type="subcellular location">
    <subcellularLocation>
        <location evidence="1">Cytoplasm</location>
    </subcellularLocation>
</comment>
<comment type="similarity">
    <text evidence="2">Belongs to the class-I aminoacyl-tRNA synthetase family. MetG type 2A subfamily.</text>
</comment>
<evidence type="ECO:0000250" key="1"/>
<evidence type="ECO:0000305" key="2"/>
<dbReference type="EC" id="6.1.1.10"/>
<dbReference type="EMBL" id="BA000022">
    <property type="protein sequence ID" value="BAA10371.1"/>
    <property type="molecule type" value="Genomic_DNA"/>
</dbReference>
<dbReference type="PIR" id="S76525">
    <property type="entry name" value="S76525"/>
</dbReference>
<dbReference type="SMR" id="Q55729"/>
<dbReference type="FunCoup" id="Q55729">
    <property type="interactions" value="444"/>
</dbReference>
<dbReference type="IntAct" id="Q55729">
    <property type="interactions" value="2"/>
</dbReference>
<dbReference type="STRING" id="1148.gene:10499872"/>
<dbReference type="PaxDb" id="1148-1001640"/>
<dbReference type="EnsemblBacteria" id="BAA10371">
    <property type="protein sequence ID" value="BAA10371"/>
    <property type="gene ID" value="BAA10371"/>
</dbReference>
<dbReference type="KEGG" id="syn:slr0649"/>
<dbReference type="eggNOG" id="COG0143">
    <property type="taxonomic scope" value="Bacteria"/>
</dbReference>
<dbReference type="InParanoid" id="Q55729"/>
<dbReference type="PhylomeDB" id="Q55729"/>
<dbReference type="Proteomes" id="UP000001425">
    <property type="component" value="Chromosome"/>
</dbReference>
<dbReference type="GO" id="GO:0005737">
    <property type="term" value="C:cytoplasm"/>
    <property type="evidence" value="ECO:0007669"/>
    <property type="project" value="UniProtKB-SubCell"/>
</dbReference>
<dbReference type="GO" id="GO:0005524">
    <property type="term" value="F:ATP binding"/>
    <property type="evidence" value="ECO:0007669"/>
    <property type="project" value="UniProtKB-UniRule"/>
</dbReference>
<dbReference type="GO" id="GO:0046872">
    <property type="term" value="F:metal ion binding"/>
    <property type="evidence" value="ECO:0007669"/>
    <property type="project" value="UniProtKB-KW"/>
</dbReference>
<dbReference type="GO" id="GO:0004825">
    <property type="term" value="F:methionine-tRNA ligase activity"/>
    <property type="evidence" value="ECO:0000318"/>
    <property type="project" value="GO_Central"/>
</dbReference>
<dbReference type="GO" id="GO:0006431">
    <property type="term" value="P:methionyl-tRNA aminoacylation"/>
    <property type="evidence" value="ECO:0000318"/>
    <property type="project" value="GO_Central"/>
</dbReference>
<dbReference type="CDD" id="cd07957">
    <property type="entry name" value="Anticodon_Ia_Met"/>
    <property type="match status" value="1"/>
</dbReference>
<dbReference type="CDD" id="cd00814">
    <property type="entry name" value="MetRS_core"/>
    <property type="match status" value="1"/>
</dbReference>
<dbReference type="FunFam" id="1.10.730.10:FF:000127">
    <property type="entry name" value="Methionine--tRNA ligase"/>
    <property type="match status" value="1"/>
</dbReference>
<dbReference type="FunFam" id="2.170.220.10:FF:000001">
    <property type="entry name" value="methionine--tRNA ligase, mitochondrial"/>
    <property type="match status" value="1"/>
</dbReference>
<dbReference type="Gene3D" id="2.170.220.10">
    <property type="match status" value="1"/>
</dbReference>
<dbReference type="Gene3D" id="3.40.50.620">
    <property type="entry name" value="HUPs"/>
    <property type="match status" value="1"/>
</dbReference>
<dbReference type="Gene3D" id="1.10.730.10">
    <property type="entry name" value="Isoleucyl-tRNA Synthetase, Domain 1"/>
    <property type="match status" value="1"/>
</dbReference>
<dbReference type="HAMAP" id="MF_01228">
    <property type="entry name" value="Met_tRNA_synth_type2"/>
    <property type="match status" value="1"/>
</dbReference>
<dbReference type="InterPro" id="IPR041872">
    <property type="entry name" value="Anticodon_Met"/>
</dbReference>
<dbReference type="InterPro" id="IPR014758">
    <property type="entry name" value="Met-tRNA_synth"/>
</dbReference>
<dbReference type="InterPro" id="IPR023457">
    <property type="entry name" value="Met-tRNA_synth_2"/>
</dbReference>
<dbReference type="InterPro" id="IPR015413">
    <property type="entry name" value="Methionyl/Leucyl_tRNA_Synth"/>
</dbReference>
<dbReference type="InterPro" id="IPR033911">
    <property type="entry name" value="MetRS_core"/>
</dbReference>
<dbReference type="InterPro" id="IPR014729">
    <property type="entry name" value="Rossmann-like_a/b/a_fold"/>
</dbReference>
<dbReference type="InterPro" id="IPR032678">
    <property type="entry name" value="tRNA-synt_1_cat_dom"/>
</dbReference>
<dbReference type="InterPro" id="IPR009080">
    <property type="entry name" value="tRNAsynth_Ia_anticodon-bd"/>
</dbReference>
<dbReference type="NCBIfam" id="TIGR00398">
    <property type="entry name" value="metG"/>
    <property type="match status" value="1"/>
</dbReference>
<dbReference type="NCBIfam" id="NF008900">
    <property type="entry name" value="PRK12267.1"/>
    <property type="match status" value="1"/>
</dbReference>
<dbReference type="PANTHER" id="PTHR43326:SF1">
    <property type="entry name" value="METHIONINE--TRNA LIGASE, MITOCHONDRIAL"/>
    <property type="match status" value="1"/>
</dbReference>
<dbReference type="PANTHER" id="PTHR43326">
    <property type="entry name" value="METHIONYL-TRNA SYNTHETASE"/>
    <property type="match status" value="1"/>
</dbReference>
<dbReference type="Pfam" id="PF19303">
    <property type="entry name" value="Anticodon_3"/>
    <property type="match status" value="1"/>
</dbReference>
<dbReference type="Pfam" id="PF01406">
    <property type="entry name" value="tRNA-synt_1e"/>
    <property type="match status" value="1"/>
</dbReference>
<dbReference type="Pfam" id="PF09334">
    <property type="entry name" value="tRNA-synt_1g"/>
    <property type="match status" value="1"/>
</dbReference>
<dbReference type="PRINTS" id="PR01041">
    <property type="entry name" value="TRNASYNTHMET"/>
</dbReference>
<dbReference type="SUPFAM" id="SSF47323">
    <property type="entry name" value="Anticodon-binding domain of a subclass of class I aminoacyl-tRNA synthetases"/>
    <property type="match status" value="1"/>
</dbReference>
<dbReference type="SUPFAM" id="SSF52374">
    <property type="entry name" value="Nucleotidylyl transferase"/>
    <property type="match status" value="1"/>
</dbReference>
<gene>
    <name type="primary">metG</name>
    <name type="synonym">metS</name>
    <name type="ordered locus">slr0649</name>
</gene>
<keyword id="KW-0030">Aminoacyl-tRNA synthetase</keyword>
<keyword id="KW-0067">ATP-binding</keyword>
<keyword id="KW-0963">Cytoplasm</keyword>
<keyword id="KW-0436">Ligase</keyword>
<keyword id="KW-0479">Metal-binding</keyword>
<keyword id="KW-0547">Nucleotide-binding</keyword>
<keyword id="KW-0648">Protein biosynthesis</keyword>
<keyword id="KW-1185">Reference proteome</keyword>
<keyword id="KW-0862">Zinc</keyword>
<proteinExistence type="inferred from homology"/>
<name>SYM_SYNY3</name>
<accession>Q55729</accession>
<protein>
    <recommendedName>
        <fullName>Methionine--tRNA ligase</fullName>
        <ecNumber>6.1.1.10</ecNumber>
    </recommendedName>
    <alternativeName>
        <fullName>Methionyl-tRNA synthetase</fullName>
        <shortName>MetRS</shortName>
    </alternativeName>
</protein>